<sequence>MEKIDGKDQSSQGDEEKEPPKSYPYSVETPYGFHLDLDFLKYVDDIEKGHTIKRIPIHRRAKQAKFSTLPRNFSLPNSGDRTYAVPPQQNWSPVVPRKISLGTQEPSQPLPLGDLPQASVQGSELNYHRKALLAKDARQAEAGSLEDVGSGRPQLLRASSMPATLLQNQVPEEPSLTSGPSTLLALPLLQDEGSVCDGAFDPAEGLMGFQASAQSVDRELGELEPAIPEQVWEGAEPEEGDLKASSHLSQPGPSSAVQSVPMDLEEVEIEHHMREAELVLTPGSATPSPPPLPSPILENDLSLDEIELSISEIPPPPPIEVDVRSIGIRVTEESLGLLETDTSSISSLKNQVLALEDKLSGRTEELARVRAALEQQEEETKAREQRIQELECTVAHLEEKLSQERASEAPDRTDATVNTDPLQELTPRESHDKNIGVNLLNTPDPECRAPRAEKNGFPWVQNNHKQSYPSPEEPVLPPQLSLPRGPEQILASSLCSCLSMELRIEEEGSEQEGGQEEGAGGLSRAAGESSWSTRESAPVIREEATSELPGAERPGRPASSPQDATIGQYVKKIQELLHEQWNCLEHGYPELASAIKQPASKLSSIQNQLLSSLNLLLSAYSAQAPEPEPKETPAPPPSTPPPPPPPPPEISPSTSLKSIMKKKDYGFRAGGNGTKKNLQFVGVNGGYETTSSEETSGEDSSPEDLSDSETEKKQDCSESREDRDLHPSCEAGQGVPEGTRNSGHTSDRGEEVSHLRAERYKPSEEFLNACQTLSQHLPETGDTTKQLLRQSLNTISQEWFRVSSRKLSSPEAVAAYLLEVQPHSPYLLKLLVNLADRSGNTALHYSVSHSNFAIVKLLLDTGVCNVDHQNKAGYTAVMITPLASAETKEDMAVVWKLLREGNVNIQATQGGQTALMLGVSHDREDMVQALLSCQADVNLQDNDGSSALMLACHQGNADLVRLLLAHPACNSSLTDKAGRTALSLVLNSPAHVEIAELLRAHSEPGRSLGPKELQKN</sequence>
<protein>
    <recommendedName>
        <fullName>KN motif and ankyrin repeat domain-containing protein 4</fullName>
    </recommendedName>
    <alternativeName>
        <fullName>Ankyrin repeat domain-containing protein 38</fullName>
    </alternativeName>
</protein>
<name>KANK4_MOUSE</name>
<feature type="chain" id="PRO_0000244365" description="KN motif and ankyrin repeat domain-containing protein 4">
    <location>
        <begin position="1"/>
        <end position="1016"/>
    </location>
</feature>
<feature type="repeat" description="ANK 1">
    <location>
        <begin position="838"/>
        <end position="868"/>
    </location>
</feature>
<feature type="repeat" description="ANK 2">
    <location>
        <begin position="877"/>
        <end position="905"/>
    </location>
</feature>
<feature type="repeat" description="ANK 3">
    <location>
        <begin position="910"/>
        <end position="939"/>
    </location>
</feature>
<feature type="repeat" description="ANK 4">
    <location>
        <begin position="943"/>
        <end position="973"/>
    </location>
</feature>
<feature type="repeat" description="ANK 5">
    <location>
        <begin position="977"/>
        <end position="1007"/>
    </location>
</feature>
<feature type="region of interest" description="Disordered" evidence="3">
    <location>
        <begin position="1"/>
        <end position="26"/>
    </location>
</feature>
<feature type="region of interest" description="Disordered" evidence="3">
    <location>
        <begin position="70"/>
        <end position="91"/>
    </location>
</feature>
<feature type="region of interest" description="Disordered" evidence="3">
    <location>
        <begin position="235"/>
        <end position="259"/>
    </location>
</feature>
<feature type="region of interest" description="Disordered" evidence="3">
    <location>
        <begin position="401"/>
        <end position="485"/>
    </location>
</feature>
<feature type="region of interest" description="Disordered" evidence="3">
    <location>
        <begin position="506"/>
        <end position="563"/>
    </location>
</feature>
<feature type="region of interest" description="Disordered" evidence="3">
    <location>
        <begin position="622"/>
        <end position="755"/>
    </location>
</feature>
<feature type="coiled-coil region" evidence="2">
    <location>
        <begin position="346"/>
        <end position="409"/>
    </location>
</feature>
<feature type="compositionally biased region" description="Polar residues" evidence="3">
    <location>
        <begin position="70"/>
        <end position="80"/>
    </location>
</feature>
<feature type="compositionally biased region" description="Polar residues" evidence="3">
    <location>
        <begin position="246"/>
        <end position="258"/>
    </location>
</feature>
<feature type="compositionally biased region" description="Basic and acidic residues" evidence="3">
    <location>
        <begin position="401"/>
        <end position="414"/>
    </location>
</feature>
<feature type="compositionally biased region" description="Basic and acidic residues" evidence="3">
    <location>
        <begin position="445"/>
        <end position="454"/>
    </location>
</feature>
<feature type="compositionally biased region" description="Polar residues" evidence="3">
    <location>
        <begin position="460"/>
        <end position="469"/>
    </location>
</feature>
<feature type="compositionally biased region" description="Pro residues" evidence="3">
    <location>
        <begin position="632"/>
        <end position="650"/>
    </location>
</feature>
<feature type="compositionally biased region" description="Acidic residues" evidence="3">
    <location>
        <begin position="695"/>
        <end position="708"/>
    </location>
</feature>
<feature type="compositionally biased region" description="Basic and acidic residues" evidence="3">
    <location>
        <begin position="709"/>
        <end position="727"/>
    </location>
</feature>
<feature type="compositionally biased region" description="Basic and acidic residues" evidence="3">
    <location>
        <begin position="745"/>
        <end position="755"/>
    </location>
</feature>
<feature type="modified residue" description="Phosphothreonine" evidence="5">
    <location>
        <position position="639"/>
    </location>
</feature>
<feature type="sequence conflict" description="In Ref. 1; BAC38246." evidence="4" ref="1">
    <original>P</original>
    <variation>A</variation>
    <location>
        <position position="282"/>
    </location>
</feature>
<evidence type="ECO:0000250" key="1">
    <source>
        <dbReference type="UniProtKB" id="Q5T7N3"/>
    </source>
</evidence>
<evidence type="ECO:0000255" key="2"/>
<evidence type="ECO:0000256" key="3">
    <source>
        <dbReference type="SAM" id="MobiDB-lite"/>
    </source>
</evidence>
<evidence type="ECO:0000305" key="4"/>
<evidence type="ECO:0007744" key="5">
    <source>
    </source>
</evidence>
<keyword id="KW-0040">ANK repeat</keyword>
<keyword id="KW-0175">Coiled coil</keyword>
<keyword id="KW-0963">Cytoplasm</keyword>
<keyword id="KW-0597">Phosphoprotein</keyword>
<keyword id="KW-1185">Reference proteome</keyword>
<keyword id="KW-0677">Repeat</keyword>
<proteinExistence type="evidence at protein level"/>
<gene>
    <name type="primary">Kank4</name>
    <name type="synonym">Ankrd38</name>
</gene>
<dbReference type="EMBL" id="AK081525">
    <property type="protein sequence ID" value="BAC38246.1"/>
    <property type="molecule type" value="mRNA"/>
</dbReference>
<dbReference type="EMBL" id="BC060737">
    <property type="protein sequence ID" value="AAH60737.1"/>
    <property type="molecule type" value="mRNA"/>
</dbReference>
<dbReference type="CCDS" id="CCDS18379.1"/>
<dbReference type="RefSeq" id="NP_766460.2">
    <property type="nucleotide sequence ID" value="NM_172872.3"/>
</dbReference>
<dbReference type="SMR" id="Q6P9J5"/>
<dbReference type="BioGRID" id="232421">
    <property type="interactions" value="2"/>
</dbReference>
<dbReference type="FunCoup" id="Q6P9J5">
    <property type="interactions" value="532"/>
</dbReference>
<dbReference type="IntAct" id="Q6P9J5">
    <property type="interactions" value="1"/>
</dbReference>
<dbReference type="MINT" id="Q6P9J5"/>
<dbReference type="STRING" id="10090.ENSMUSP00000099851"/>
<dbReference type="GlyGen" id="Q6P9J5">
    <property type="glycosylation" value="4 sites, 2 N-linked glycans (2 sites)"/>
</dbReference>
<dbReference type="iPTMnet" id="Q6P9J5"/>
<dbReference type="PhosphoSitePlus" id="Q6P9J5"/>
<dbReference type="PaxDb" id="10090-ENSMUSP00000099851"/>
<dbReference type="PeptideAtlas" id="Q6P9J5"/>
<dbReference type="ProteomicsDB" id="301728"/>
<dbReference type="Antibodypedia" id="2864">
    <property type="antibodies" value="25 antibodies from 13 providers"/>
</dbReference>
<dbReference type="DNASU" id="242553"/>
<dbReference type="Ensembl" id="ENSMUST00000102790.4">
    <property type="protein sequence ID" value="ENSMUSP00000099851.4"/>
    <property type="gene ID" value="ENSMUSG00000035407.9"/>
</dbReference>
<dbReference type="GeneID" id="242553"/>
<dbReference type="KEGG" id="mmu:242553"/>
<dbReference type="UCSC" id="uc008tuk.2">
    <property type="organism name" value="mouse"/>
</dbReference>
<dbReference type="AGR" id="MGI:3043381"/>
<dbReference type="CTD" id="163782"/>
<dbReference type="MGI" id="MGI:3043381">
    <property type="gene designation" value="Kank4"/>
</dbReference>
<dbReference type="VEuPathDB" id="HostDB:ENSMUSG00000035407"/>
<dbReference type="eggNOG" id="KOG0514">
    <property type="taxonomic scope" value="Eukaryota"/>
</dbReference>
<dbReference type="GeneTree" id="ENSGT00940000158468"/>
<dbReference type="HOGENOM" id="CLU_004269_0_0_1"/>
<dbReference type="InParanoid" id="Q6P9J5"/>
<dbReference type="OMA" id="QSCQGDE"/>
<dbReference type="OrthoDB" id="5406014at2759"/>
<dbReference type="PhylomeDB" id="Q6P9J5"/>
<dbReference type="TreeFam" id="TF324499"/>
<dbReference type="BioGRID-ORCS" id="242553">
    <property type="hits" value="2 hits in 76 CRISPR screens"/>
</dbReference>
<dbReference type="ChiTaRS" id="Kank4">
    <property type="organism name" value="mouse"/>
</dbReference>
<dbReference type="PRO" id="PR:Q6P9J5"/>
<dbReference type="Proteomes" id="UP000000589">
    <property type="component" value="Chromosome 4"/>
</dbReference>
<dbReference type="RNAct" id="Q6P9J5">
    <property type="molecule type" value="protein"/>
</dbReference>
<dbReference type="Bgee" id="ENSMUSG00000035407">
    <property type="expression patterns" value="Expressed in sciatic nerve and 153 other cell types or tissues"/>
</dbReference>
<dbReference type="GO" id="GO:0005737">
    <property type="term" value="C:cytoplasm"/>
    <property type="evidence" value="ECO:0000250"/>
    <property type="project" value="UniProtKB"/>
</dbReference>
<dbReference type="GO" id="GO:0005829">
    <property type="term" value="C:cytosol"/>
    <property type="evidence" value="ECO:0007669"/>
    <property type="project" value="Ensembl"/>
</dbReference>
<dbReference type="GO" id="GO:0015630">
    <property type="term" value="C:microtubule cytoskeleton"/>
    <property type="evidence" value="ECO:0007669"/>
    <property type="project" value="Ensembl"/>
</dbReference>
<dbReference type="GO" id="GO:0030837">
    <property type="term" value="P:negative regulation of actin filament polymerization"/>
    <property type="evidence" value="ECO:0007669"/>
    <property type="project" value="InterPro"/>
</dbReference>
<dbReference type="GO" id="GO:0051497">
    <property type="term" value="P:negative regulation of stress fiber assembly"/>
    <property type="evidence" value="ECO:0000266"/>
    <property type="project" value="MGI"/>
</dbReference>
<dbReference type="FunFam" id="1.25.40.20:FF:000135">
    <property type="entry name" value="KN motif and ankyrin repeat domains 4"/>
    <property type="match status" value="1"/>
</dbReference>
<dbReference type="Gene3D" id="1.25.40.20">
    <property type="entry name" value="Ankyrin repeat-containing domain"/>
    <property type="match status" value="1"/>
</dbReference>
<dbReference type="InterPro" id="IPR002110">
    <property type="entry name" value="Ankyrin_rpt"/>
</dbReference>
<dbReference type="InterPro" id="IPR036770">
    <property type="entry name" value="Ankyrin_rpt-contain_sf"/>
</dbReference>
<dbReference type="InterPro" id="IPR047184">
    <property type="entry name" value="KANK1-4"/>
</dbReference>
<dbReference type="InterPro" id="IPR021939">
    <property type="entry name" value="KN_motif"/>
</dbReference>
<dbReference type="PANTHER" id="PTHR24168">
    <property type="entry name" value="KN MOTIF AND ANKYRIN REPEAT DOMAIN-CONTAINING"/>
    <property type="match status" value="1"/>
</dbReference>
<dbReference type="PANTHER" id="PTHR24168:SF24">
    <property type="entry name" value="KN MOTIF AND ANKYRIN REPEAT DOMAIN-CONTAINING PROTEIN 4"/>
    <property type="match status" value="1"/>
</dbReference>
<dbReference type="Pfam" id="PF12796">
    <property type="entry name" value="Ank_2"/>
    <property type="match status" value="2"/>
</dbReference>
<dbReference type="Pfam" id="PF12075">
    <property type="entry name" value="KN_motif"/>
    <property type="match status" value="1"/>
</dbReference>
<dbReference type="SMART" id="SM00248">
    <property type="entry name" value="ANK"/>
    <property type="match status" value="5"/>
</dbReference>
<dbReference type="SUPFAM" id="SSF48403">
    <property type="entry name" value="Ankyrin repeat"/>
    <property type="match status" value="1"/>
</dbReference>
<dbReference type="PROSITE" id="PS50297">
    <property type="entry name" value="ANK_REP_REGION"/>
    <property type="match status" value="1"/>
</dbReference>
<dbReference type="PROSITE" id="PS50088">
    <property type="entry name" value="ANK_REPEAT"/>
    <property type="match status" value="3"/>
</dbReference>
<comment type="function">
    <text evidence="1">May be involved in the control of cytoskeleton formation by regulating actin polymerization.</text>
</comment>
<comment type="subcellular location">
    <subcellularLocation>
        <location evidence="1">Cytoplasm</location>
    </subcellularLocation>
</comment>
<reference key="1">
    <citation type="journal article" date="2005" name="Science">
        <title>The transcriptional landscape of the mammalian genome.</title>
        <authorList>
            <person name="Carninci P."/>
            <person name="Kasukawa T."/>
            <person name="Katayama S."/>
            <person name="Gough J."/>
            <person name="Frith M.C."/>
            <person name="Maeda N."/>
            <person name="Oyama R."/>
            <person name="Ravasi T."/>
            <person name="Lenhard B."/>
            <person name="Wells C."/>
            <person name="Kodzius R."/>
            <person name="Shimokawa K."/>
            <person name="Bajic V.B."/>
            <person name="Brenner S.E."/>
            <person name="Batalov S."/>
            <person name="Forrest A.R."/>
            <person name="Zavolan M."/>
            <person name="Davis M.J."/>
            <person name="Wilming L.G."/>
            <person name="Aidinis V."/>
            <person name="Allen J.E."/>
            <person name="Ambesi-Impiombato A."/>
            <person name="Apweiler R."/>
            <person name="Aturaliya R.N."/>
            <person name="Bailey T.L."/>
            <person name="Bansal M."/>
            <person name="Baxter L."/>
            <person name="Beisel K.W."/>
            <person name="Bersano T."/>
            <person name="Bono H."/>
            <person name="Chalk A.M."/>
            <person name="Chiu K.P."/>
            <person name="Choudhary V."/>
            <person name="Christoffels A."/>
            <person name="Clutterbuck D.R."/>
            <person name="Crowe M.L."/>
            <person name="Dalla E."/>
            <person name="Dalrymple B.P."/>
            <person name="de Bono B."/>
            <person name="Della Gatta G."/>
            <person name="di Bernardo D."/>
            <person name="Down T."/>
            <person name="Engstrom P."/>
            <person name="Fagiolini M."/>
            <person name="Faulkner G."/>
            <person name="Fletcher C.F."/>
            <person name="Fukushima T."/>
            <person name="Furuno M."/>
            <person name="Futaki S."/>
            <person name="Gariboldi M."/>
            <person name="Georgii-Hemming P."/>
            <person name="Gingeras T.R."/>
            <person name="Gojobori T."/>
            <person name="Green R.E."/>
            <person name="Gustincich S."/>
            <person name="Harbers M."/>
            <person name="Hayashi Y."/>
            <person name="Hensch T.K."/>
            <person name="Hirokawa N."/>
            <person name="Hill D."/>
            <person name="Huminiecki L."/>
            <person name="Iacono M."/>
            <person name="Ikeo K."/>
            <person name="Iwama A."/>
            <person name="Ishikawa T."/>
            <person name="Jakt M."/>
            <person name="Kanapin A."/>
            <person name="Katoh M."/>
            <person name="Kawasawa Y."/>
            <person name="Kelso J."/>
            <person name="Kitamura H."/>
            <person name="Kitano H."/>
            <person name="Kollias G."/>
            <person name="Krishnan S.P."/>
            <person name="Kruger A."/>
            <person name="Kummerfeld S.K."/>
            <person name="Kurochkin I.V."/>
            <person name="Lareau L.F."/>
            <person name="Lazarevic D."/>
            <person name="Lipovich L."/>
            <person name="Liu J."/>
            <person name="Liuni S."/>
            <person name="McWilliam S."/>
            <person name="Madan Babu M."/>
            <person name="Madera M."/>
            <person name="Marchionni L."/>
            <person name="Matsuda H."/>
            <person name="Matsuzawa S."/>
            <person name="Miki H."/>
            <person name="Mignone F."/>
            <person name="Miyake S."/>
            <person name="Morris K."/>
            <person name="Mottagui-Tabar S."/>
            <person name="Mulder N."/>
            <person name="Nakano N."/>
            <person name="Nakauchi H."/>
            <person name="Ng P."/>
            <person name="Nilsson R."/>
            <person name="Nishiguchi S."/>
            <person name="Nishikawa S."/>
            <person name="Nori F."/>
            <person name="Ohara O."/>
            <person name="Okazaki Y."/>
            <person name="Orlando V."/>
            <person name="Pang K.C."/>
            <person name="Pavan W.J."/>
            <person name="Pavesi G."/>
            <person name="Pesole G."/>
            <person name="Petrovsky N."/>
            <person name="Piazza S."/>
            <person name="Reed J."/>
            <person name="Reid J.F."/>
            <person name="Ring B.Z."/>
            <person name="Ringwald M."/>
            <person name="Rost B."/>
            <person name="Ruan Y."/>
            <person name="Salzberg S.L."/>
            <person name="Sandelin A."/>
            <person name="Schneider C."/>
            <person name="Schoenbach C."/>
            <person name="Sekiguchi K."/>
            <person name="Semple C.A."/>
            <person name="Seno S."/>
            <person name="Sessa L."/>
            <person name="Sheng Y."/>
            <person name="Shibata Y."/>
            <person name="Shimada H."/>
            <person name="Shimada K."/>
            <person name="Silva D."/>
            <person name="Sinclair B."/>
            <person name="Sperling S."/>
            <person name="Stupka E."/>
            <person name="Sugiura K."/>
            <person name="Sultana R."/>
            <person name="Takenaka Y."/>
            <person name="Taki K."/>
            <person name="Tammoja K."/>
            <person name="Tan S.L."/>
            <person name="Tang S."/>
            <person name="Taylor M.S."/>
            <person name="Tegner J."/>
            <person name="Teichmann S.A."/>
            <person name="Ueda H.R."/>
            <person name="van Nimwegen E."/>
            <person name="Verardo R."/>
            <person name="Wei C.L."/>
            <person name="Yagi K."/>
            <person name="Yamanishi H."/>
            <person name="Zabarovsky E."/>
            <person name="Zhu S."/>
            <person name="Zimmer A."/>
            <person name="Hide W."/>
            <person name="Bult C."/>
            <person name="Grimmond S.M."/>
            <person name="Teasdale R.D."/>
            <person name="Liu E.T."/>
            <person name="Brusic V."/>
            <person name="Quackenbush J."/>
            <person name="Wahlestedt C."/>
            <person name="Mattick J.S."/>
            <person name="Hume D.A."/>
            <person name="Kai C."/>
            <person name="Sasaki D."/>
            <person name="Tomaru Y."/>
            <person name="Fukuda S."/>
            <person name="Kanamori-Katayama M."/>
            <person name="Suzuki M."/>
            <person name="Aoki J."/>
            <person name="Arakawa T."/>
            <person name="Iida J."/>
            <person name="Imamura K."/>
            <person name="Itoh M."/>
            <person name="Kato T."/>
            <person name="Kawaji H."/>
            <person name="Kawagashira N."/>
            <person name="Kawashima T."/>
            <person name="Kojima M."/>
            <person name="Kondo S."/>
            <person name="Konno H."/>
            <person name="Nakano K."/>
            <person name="Ninomiya N."/>
            <person name="Nishio T."/>
            <person name="Okada M."/>
            <person name="Plessy C."/>
            <person name="Shibata K."/>
            <person name="Shiraki T."/>
            <person name="Suzuki S."/>
            <person name="Tagami M."/>
            <person name="Waki K."/>
            <person name="Watahiki A."/>
            <person name="Okamura-Oho Y."/>
            <person name="Suzuki H."/>
            <person name="Kawai J."/>
            <person name="Hayashizaki Y."/>
        </authorList>
    </citation>
    <scope>NUCLEOTIDE SEQUENCE [LARGE SCALE MRNA]</scope>
    <source>
        <strain>C57BL/6J</strain>
        <tissue>Head</tissue>
    </source>
</reference>
<reference key="2">
    <citation type="journal article" date="2004" name="Genome Res.">
        <title>The status, quality, and expansion of the NIH full-length cDNA project: the Mammalian Gene Collection (MGC).</title>
        <authorList>
            <consortium name="The MGC Project Team"/>
        </authorList>
    </citation>
    <scope>NUCLEOTIDE SEQUENCE [LARGE SCALE MRNA]</scope>
    <source>
        <strain>FVB/N</strain>
        <tissue>Salivary gland</tissue>
    </source>
</reference>
<reference key="3">
    <citation type="journal article" date="2010" name="Cell">
        <title>A tissue-specific atlas of mouse protein phosphorylation and expression.</title>
        <authorList>
            <person name="Huttlin E.L."/>
            <person name="Jedrychowski M.P."/>
            <person name="Elias J.E."/>
            <person name="Goswami T."/>
            <person name="Rad R."/>
            <person name="Beausoleil S.A."/>
            <person name="Villen J."/>
            <person name="Haas W."/>
            <person name="Sowa M.E."/>
            <person name="Gygi S.P."/>
        </authorList>
    </citation>
    <scope>PHOSPHORYLATION [LARGE SCALE ANALYSIS] AT THR-639</scope>
    <scope>IDENTIFICATION BY MASS SPECTROMETRY [LARGE SCALE ANALYSIS]</scope>
    <source>
        <tissue>Brain</tissue>
        <tissue>Kidney</tissue>
        <tissue>Lung</tissue>
    </source>
</reference>
<organism>
    <name type="scientific">Mus musculus</name>
    <name type="common">Mouse</name>
    <dbReference type="NCBI Taxonomy" id="10090"/>
    <lineage>
        <taxon>Eukaryota</taxon>
        <taxon>Metazoa</taxon>
        <taxon>Chordata</taxon>
        <taxon>Craniata</taxon>
        <taxon>Vertebrata</taxon>
        <taxon>Euteleostomi</taxon>
        <taxon>Mammalia</taxon>
        <taxon>Eutheria</taxon>
        <taxon>Euarchontoglires</taxon>
        <taxon>Glires</taxon>
        <taxon>Rodentia</taxon>
        <taxon>Myomorpha</taxon>
        <taxon>Muroidea</taxon>
        <taxon>Muridae</taxon>
        <taxon>Murinae</taxon>
        <taxon>Mus</taxon>
        <taxon>Mus</taxon>
    </lineage>
</organism>
<accession>Q6P9J5</accession>
<accession>Q8BV03</accession>